<evidence type="ECO:0000255" key="1">
    <source>
        <dbReference type="HAMAP-Rule" id="MF_00122"/>
    </source>
</evidence>
<accession>Q4UKF2</accession>
<name>GATC_RICFE</name>
<keyword id="KW-0067">ATP-binding</keyword>
<keyword id="KW-0436">Ligase</keyword>
<keyword id="KW-0547">Nucleotide-binding</keyword>
<keyword id="KW-0648">Protein biosynthesis</keyword>
<protein>
    <recommendedName>
        <fullName evidence="1">Aspartyl/glutamyl-tRNA(Asn/Gln) amidotransferase subunit C</fullName>
        <shortName evidence="1">Asp/Glu-ADT subunit C</shortName>
        <ecNumber evidence="1">6.3.5.-</ecNumber>
    </recommendedName>
</protein>
<feature type="chain" id="PRO_0000274843" description="Aspartyl/glutamyl-tRNA(Asn/Gln) amidotransferase subunit C">
    <location>
        <begin position="1"/>
        <end position="100"/>
    </location>
</feature>
<organism>
    <name type="scientific">Rickettsia felis (strain ATCC VR-1525 / URRWXCal2)</name>
    <name type="common">Rickettsia azadi</name>
    <dbReference type="NCBI Taxonomy" id="315456"/>
    <lineage>
        <taxon>Bacteria</taxon>
        <taxon>Pseudomonadati</taxon>
        <taxon>Pseudomonadota</taxon>
        <taxon>Alphaproteobacteria</taxon>
        <taxon>Rickettsiales</taxon>
        <taxon>Rickettsiaceae</taxon>
        <taxon>Rickettsieae</taxon>
        <taxon>Rickettsia</taxon>
        <taxon>spotted fever group</taxon>
    </lineage>
</organism>
<proteinExistence type="inferred from homology"/>
<gene>
    <name evidence="1" type="primary">gatC</name>
    <name type="ordered locus">RF_1128</name>
</gene>
<comment type="function">
    <text evidence="1">Allows the formation of correctly charged Asn-tRNA(Asn) or Gln-tRNA(Gln) through the transamidation of misacylated Asp-tRNA(Asn) or Glu-tRNA(Gln) in organisms which lack either or both of asparaginyl-tRNA or glutaminyl-tRNA synthetases. The reaction takes place in the presence of glutamine and ATP through an activated phospho-Asp-tRNA(Asn) or phospho-Glu-tRNA(Gln).</text>
</comment>
<comment type="catalytic activity">
    <reaction evidence="1">
        <text>L-glutamyl-tRNA(Gln) + L-glutamine + ATP + H2O = L-glutaminyl-tRNA(Gln) + L-glutamate + ADP + phosphate + H(+)</text>
        <dbReference type="Rhea" id="RHEA:17521"/>
        <dbReference type="Rhea" id="RHEA-COMP:9681"/>
        <dbReference type="Rhea" id="RHEA-COMP:9684"/>
        <dbReference type="ChEBI" id="CHEBI:15377"/>
        <dbReference type="ChEBI" id="CHEBI:15378"/>
        <dbReference type="ChEBI" id="CHEBI:29985"/>
        <dbReference type="ChEBI" id="CHEBI:30616"/>
        <dbReference type="ChEBI" id="CHEBI:43474"/>
        <dbReference type="ChEBI" id="CHEBI:58359"/>
        <dbReference type="ChEBI" id="CHEBI:78520"/>
        <dbReference type="ChEBI" id="CHEBI:78521"/>
        <dbReference type="ChEBI" id="CHEBI:456216"/>
    </reaction>
</comment>
<comment type="catalytic activity">
    <reaction evidence="1">
        <text>L-aspartyl-tRNA(Asn) + L-glutamine + ATP + H2O = L-asparaginyl-tRNA(Asn) + L-glutamate + ADP + phosphate + 2 H(+)</text>
        <dbReference type="Rhea" id="RHEA:14513"/>
        <dbReference type="Rhea" id="RHEA-COMP:9674"/>
        <dbReference type="Rhea" id="RHEA-COMP:9677"/>
        <dbReference type="ChEBI" id="CHEBI:15377"/>
        <dbReference type="ChEBI" id="CHEBI:15378"/>
        <dbReference type="ChEBI" id="CHEBI:29985"/>
        <dbReference type="ChEBI" id="CHEBI:30616"/>
        <dbReference type="ChEBI" id="CHEBI:43474"/>
        <dbReference type="ChEBI" id="CHEBI:58359"/>
        <dbReference type="ChEBI" id="CHEBI:78515"/>
        <dbReference type="ChEBI" id="CHEBI:78516"/>
        <dbReference type="ChEBI" id="CHEBI:456216"/>
    </reaction>
</comment>
<comment type="subunit">
    <text evidence="1">Heterotrimer of A, B and C subunits.</text>
</comment>
<comment type="similarity">
    <text evidence="1">Belongs to the GatC family.</text>
</comment>
<sequence>MITKEEAQKIAKLARLKFEEDTVEKFSAQLSTIMNMIDILNEIDCKDIEPLTSVSNMNVRMREDVVTSSDLSNKLFDNVSGNSAQLAKEVKYFITPKVIE</sequence>
<reference key="1">
    <citation type="journal article" date="2005" name="PLoS Biol.">
        <title>The genome sequence of Rickettsia felis identifies the first putative conjugative plasmid in an obligate intracellular parasite.</title>
        <authorList>
            <person name="Ogata H."/>
            <person name="Renesto P."/>
            <person name="Audic S."/>
            <person name="Robert C."/>
            <person name="Blanc G."/>
            <person name="Fournier P.-E."/>
            <person name="Parinello H."/>
            <person name="Claverie J.-M."/>
            <person name="Raoult D."/>
        </authorList>
    </citation>
    <scope>NUCLEOTIDE SEQUENCE [LARGE SCALE GENOMIC DNA]</scope>
    <source>
        <strain>ATCC VR-1525 / URRWXCal2</strain>
    </source>
</reference>
<dbReference type="EC" id="6.3.5.-" evidence="1"/>
<dbReference type="EMBL" id="CP000053">
    <property type="protein sequence ID" value="AAY61979.1"/>
    <property type="molecule type" value="Genomic_DNA"/>
</dbReference>
<dbReference type="SMR" id="Q4UKF2"/>
<dbReference type="STRING" id="315456.RF_1128"/>
<dbReference type="KEGG" id="rfe:RF_1128"/>
<dbReference type="eggNOG" id="COG0721">
    <property type="taxonomic scope" value="Bacteria"/>
</dbReference>
<dbReference type="HOGENOM" id="CLU_105899_2_0_5"/>
<dbReference type="OrthoDB" id="9794326at2"/>
<dbReference type="Proteomes" id="UP000008548">
    <property type="component" value="Chromosome"/>
</dbReference>
<dbReference type="GO" id="GO:0050566">
    <property type="term" value="F:asparaginyl-tRNA synthase (glutamine-hydrolyzing) activity"/>
    <property type="evidence" value="ECO:0007669"/>
    <property type="project" value="RHEA"/>
</dbReference>
<dbReference type="GO" id="GO:0005524">
    <property type="term" value="F:ATP binding"/>
    <property type="evidence" value="ECO:0007669"/>
    <property type="project" value="UniProtKB-KW"/>
</dbReference>
<dbReference type="GO" id="GO:0050567">
    <property type="term" value="F:glutaminyl-tRNA synthase (glutamine-hydrolyzing) activity"/>
    <property type="evidence" value="ECO:0007669"/>
    <property type="project" value="UniProtKB-UniRule"/>
</dbReference>
<dbReference type="GO" id="GO:0070681">
    <property type="term" value="P:glutaminyl-tRNAGln biosynthesis via transamidation"/>
    <property type="evidence" value="ECO:0007669"/>
    <property type="project" value="TreeGrafter"/>
</dbReference>
<dbReference type="GO" id="GO:0006450">
    <property type="term" value="P:regulation of translational fidelity"/>
    <property type="evidence" value="ECO:0007669"/>
    <property type="project" value="InterPro"/>
</dbReference>
<dbReference type="GO" id="GO:0006412">
    <property type="term" value="P:translation"/>
    <property type="evidence" value="ECO:0007669"/>
    <property type="project" value="UniProtKB-UniRule"/>
</dbReference>
<dbReference type="Gene3D" id="1.10.20.60">
    <property type="entry name" value="Glu-tRNAGln amidotransferase C subunit, N-terminal domain"/>
    <property type="match status" value="1"/>
</dbReference>
<dbReference type="HAMAP" id="MF_00122">
    <property type="entry name" value="GatC"/>
    <property type="match status" value="1"/>
</dbReference>
<dbReference type="InterPro" id="IPR036113">
    <property type="entry name" value="Asp/Glu-ADT_sf_sub_c"/>
</dbReference>
<dbReference type="InterPro" id="IPR003837">
    <property type="entry name" value="GatC"/>
</dbReference>
<dbReference type="NCBIfam" id="TIGR00135">
    <property type="entry name" value="gatC"/>
    <property type="match status" value="1"/>
</dbReference>
<dbReference type="PANTHER" id="PTHR15004">
    <property type="entry name" value="GLUTAMYL-TRNA(GLN) AMIDOTRANSFERASE SUBUNIT C, MITOCHONDRIAL"/>
    <property type="match status" value="1"/>
</dbReference>
<dbReference type="PANTHER" id="PTHR15004:SF0">
    <property type="entry name" value="GLUTAMYL-TRNA(GLN) AMIDOTRANSFERASE SUBUNIT C, MITOCHONDRIAL"/>
    <property type="match status" value="1"/>
</dbReference>
<dbReference type="Pfam" id="PF02686">
    <property type="entry name" value="GatC"/>
    <property type="match status" value="1"/>
</dbReference>
<dbReference type="SUPFAM" id="SSF141000">
    <property type="entry name" value="Glu-tRNAGln amidotransferase C subunit"/>
    <property type="match status" value="1"/>
</dbReference>